<keyword id="KW-1185">Reference proteome</keyword>
<keyword id="KW-0678">Repressor</keyword>
<keyword id="KW-0687">Ribonucleoprotein</keyword>
<keyword id="KW-0689">Ribosomal protein</keyword>
<keyword id="KW-0694">RNA-binding</keyword>
<keyword id="KW-0699">rRNA-binding</keyword>
<keyword id="KW-0810">Translation regulation</keyword>
<keyword id="KW-0820">tRNA-binding</keyword>
<comment type="function">
    <text evidence="1">Binds directly to 23S rRNA. The L1 stalk is quite mobile in the ribosome, and is involved in E site tRNA release.</text>
</comment>
<comment type="function">
    <text evidence="1">Protein L1 is also a translational repressor protein, it controls the translation of the L11 operon by binding to its mRNA.</text>
</comment>
<comment type="subunit">
    <text evidence="1">Part of the 50S ribosomal subunit.</text>
</comment>
<comment type="similarity">
    <text evidence="1">Belongs to the universal ribosomal protein uL1 family.</text>
</comment>
<sequence>MAKKSKQLRAALEKIDSTKAYSVEEAVALAKETNFAKFDATVEVAYNLNIDVKKADQQIRGAMVLPNGTGKTSRVLVFARGAKAEEAKAAGADFVGEDDLVAKINDGWLDFDVVIATPDMMALVGRLGRVLGPRNLMPNPKTGTVTMDVAKAVEESKGGKITYRADRAGNVQAIIGKVSFEAEKLVENFKAFNETIQKAKPATAKGTYVTNLTITTTQGVGIKVDVNSL</sequence>
<dbReference type="EMBL" id="CP000410">
    <property type="protein sequence ID" value="ABJ54000.1"/>
    <property type="molecule type" value="Genomic_DNA"/>
</dbReference>
<dbReference type="RefSeq" id="WP_001085675.1">
    <property type="nucleotide sequence ID" value="NZ_JAMLJR010000001.1"/>
</dbReference>
<dbReference type="SMR" id="Q04LP6"/>
<dbReference type="PaxDb" id="373153-SPD_0551"/>
<dbReference type="GeneID" id="93739231"/>
<dbReference type="KEGG" id="spd:SPD_0551"/>
<dbReference type="eggNOG" id="COG0081">
    <property type="taxonomic scope" value="Bacteria"/>
</dbReference>
<dbReference type="HOGENOM" id="CLU_062853_0_0_9"/>
<dbReference type="BioCyc" id="SPNE373153:G1G6V-607-MONOMER"/>
<dbReference type="Proteomes" id="UP000001452">
    <property type="component" value="Chromosome"/>
</dbReference>
<dbReference type="GO" id="GO:0015934">
    <property type="term" value="C:large ribosomal subunit"/>
    <property type="evidence" value="ECO:0007669"/>
    <property type="project" value="InterPro"/>
</dbReference>
<dbReference type="GO" id="GO:0019843">
    <property type="term" value="F:rRNA binding"/>
    <property type="evidence" value="ECO:0007669"/>
    <property type="project" value="UniProtKB-UniRule"/>
</dbReference>
<dbReference type="GO" id="GO:0003735">
    <property type="term" value="F:structural constituent of ribosome"/>
    <property type="evidence" value="ECO:0007669"/>
    <property type="project" value="InterPro"/>
</dbReference>
<dbReference type="GO" id="GO:0000049">
    <property type="term" value="F:tRNA binding"/>
    <property type="evidence" value="ECO:0007669"/>
    <property type="project" value="UniProtKB-KW"/>
</dbReference>
<dbReference type="GO" id="GO:0006417">
    <property type="term" value="P:regulation of translation"/>
    <property type="evidence" value="ECO:0007669"/>
    <property type="project" value="UniProtKB-KW"/>
</dbReference>
<dbReference type="GO" id="GO:0006412">
    <property type="term" value="P:translation"/>
    <property type="evidence" value="ECO:0007669"/>
    <property type="project" value="UniProtKB-UniRule"/>
</dbReference>
<dbReference type="CDD" id="cd00403">
    <property type="entry name" value="Ribosomal_L1"/>
    <property type="match status" value="1"/>
</dbReference>
<dbReference type="FunFam" id="3.40.50.790:FF:000001">
    <property type="entry name" value="50S ribosomal protein L1"/>
    <property type="match status" value="1"/>
</dbReference>
<dbReference type="Gene3D" id="3.30.190.20">
    <property type="match status" value="1"/>
</dbReference>
<dbReference type="Gene3D" id="3.40.50.790">
    <property type="match status" value="1"/>
</dbReference>
<dbReference type="HAMAP" id="MF_01318_B">
    <property type="entry name" value="Ribosomal_uL1_B"/>
    <property type="match status" value="1"/>
</dbReference>
<dbReference type="InterPro" id="IPR005878">
    <property type="entry name" value="Ribosom_uL1_bac-type"/>
</dbReference>
<dbReference type="InterPro" id="IPR002143">
    <property type="entry name" value="Ribosomal_uL1"/>
</dbReference>
<dbReference type="InterPro" id="IPR023674">
    <property type="entry name" value="Ribosomal_uL1-like"/>
</dbReference>
<dbReference type="InterPro" id="IPR028364">
    <property type="entry name" value="Ribosomal_uL1/biogenesis"/>
</dbReference>
<dbReference type="InterPro" id="IPR016095">
    <property type="entry name" value="Ribosomal_uL1_3-a/b-sand"/>
</dbReference>
<dbReference type="InterPro" id="IPR023673">
    <property type="entry name" value="Ribosomal_uL1_CS"/>
</dbReference>
<dbReference type="NCBIfam" id="TIGR01169">
    <property type="entry name" value="rplA_bact"/>
    <property type="match status" value="1"/>
</dbReference>
<dbReference type="PANTHER" id="PTHR36427">
    <property type="entry name" value="54S RIBOSOMAL PROTEIN L1, MITOCHONDRIAL"/>
    <property type="match status" value="1"/>
</dbReference>
<dbReference type="PANTHER" id="PTHR36427:SF3">
    <property type="entry name" value="LARGE RIBOSOMAL SUBUNIT PROTEIN UL1M"/>
    <property type="match status" value="1"/>
</dbReference>
<dbReference type="Pfam" id="PF00687">
    <property type="entry name" value="Ribosomal_L1"/>
    <property type="match status" value="1"/>
</dbReference>
<dbReference type="PIRSF" id="PIRSF002155">
    <property type="entry name" value="Ribosomal_L1"/>
    <property type="match status" value="1"/>
</dbReference>
<dbReference type="SUPFAM" id="SSF56808">
    <property type="entry name" value="Ribosomal protein L1"/>
    <property type="match status" value="1"/>
</dbReference>
<dbReference type="PROSITE" id="PS01199">
    <property type="entry name" value="RIBOSOMAL_L1"/>
    <property type="match status" value="1"/>
</dbReference>
<proteinExistence type="inferred from homology"/>
<feature type="chain" id="PRO_0000308113" description="Large ribosomal subunit protein uL1">
    <location>
        <begin position="1"/>
        <end position="229"/>
    </location>
</feature>
<protein>
    <recommendedName>
        <fullName evidence="1">Large ribosomal subunit protein uL1</fullName>
    </recommendedName>
    <alternativeName>
        <fullName evidence="2">50S ribosomal protein L1</fullName>
    </alternativeName>
</protein>
<accession>Q04LP6</accession>
<gene>
    <name evidence="1" type="primary">rplA</name>
    <name type="ordered locus">SPD_0551</name>
</gene>
<reference key="1">
    <citation type="journal article" date="2007" name="J. Bacteriol.">
        <title>Genome sequence of Avery's virulent serotype 2 strain D39 of Streptococcus pneumoniae and comparison with that of unencapsulated laboratory strain R6.</title>
        <authorList>
            <person name="Lanie J.A."/>
            <person name="Ng W.-L."/>
            <person name="Kazmierczak K.M."/>
            <person name="Andrzejewski T.M."/>
            <person name="Davidsen T.M."/>
            <person name="Wayne K.J."/>
            <person name="Tettelin H."/>
            <person name="Glass J.I."/>
            <person name="Winkler M.E."/>
        </authorList>
    </citation>
    <scope>NUCLEOTIDE SEQUENCE [LARGE SCALE GENOMIC DNA]</scope>
    <source>
        <strain>D39 / NCTC 7466</strain>
    </source>
</reference>
<evidence type="ECO:0000255" key="1">
    <source>
        <dbReference type="HAMAP-Rule" id="MF_01318"/>
    </source>
</evidence>
<evidence type="ECO:0000305" key="2"/>
<organism>
    <name type="scientific">Streptococcus pneumoniae serotype 2 (strain D39 / NCTC 7466)</name>
    <dbReference type="NCBI Taxonomy" id="373153"/>
    <lineage>
        <taxon>Bacteria</taxon>
        <taxon>Bacillati</taxon>
        <taxon>Bacillota</taxon>
        <taxon>Bacilli</taxon>
        <taxon>Lactobacillales</taxon>
        <taxon>Streptococcaceae</taxon>
        <taxon>Streptococcus</taxon>
    </lineage>
</organism>
<name>RL1_STRP2</name>